<accession>B7M2G2</accession>
<proteinExistence type="inferred from homology"/>
<comment type="function">
    <text evidence="1">Catalyzes carboxymethyl transfer from carboxy-S-adenosyl-L-methionine (Cx-SAM) to 5-hydroxyuridine (ho5U) to form 5-carboxymethoxyuridine (cmo5U) at position 34 in tRNAs.</text>
</comment>
<comment type="catalytic activity">
    <reaction evidence="1">
        <text>carboxy-S-adenosyl-L-methionine + 5-hydroxyuridine(34) in tRNA = 5-carboxymethoxyuridine(34) in tRNA + S-adenosyl-L-homocysteine + H(+)</text>
        <dbReference type="Rhea" id="RHEA:52848"/>
        <dbReference type="Rhea" id="RHEA-COMP:13381"/>
        <dbReference type="Rhea" id="RHEA-COMP:13383"/>
        <dbReference type="ChEBI" id="CHEBI:15378"/>
        <dbReference type="ChEBI" id="CHEBI:57856"/>
        <dbReference type="ChEBI" id="CHEBI:134278"/>
        <dbReference type="ChEBI" id="CHEBI:136877"/>
        <dbReference type="ChEBI" id="CHEBI:136879"/>
    </reaction>
</comment>
<comment type="subunit">
    <text evidence="1">Homotetramer.</text>
</comment>
<comment type="similarity">
    <text evidence="1">Belongs to the class I-like SAM-binding methyltransferase superfamily. CmoB family.</text>
</comment>
<name>CMOB_ECO8A</name>
<protein>
    <recommendedName>
        <fullName evidence="1">tRNA U34 carboxymethyltransferase</fullName>
        <ecNumber evidence="1">2.5.1.-</ecNumber>
    </recommendedName>
</protein>
<evidence type="ECO:0000255" key="1">
    <source>
        <dbReference type="HAMAP-Rule" id="MF_01590"/>
    </source>
</evidence>
<dbReference type="EC" id="2.5.1.-" evidence="1"/>
<dbReference type="EMBL" id="CU928160">
    <property type="protein sequence ID" value="CAQ98811.1"/>
    <property type="molecule type" value="Genomic_DNA"/>
</dbReference>
<dbReference type="RefSeq" id="WP_000564745.1">
    <property type="nucleotide sequence ID" value="NC_011741.1"/>
</dbReference>
<dbReference type="SMR" id="B7M2G2"/>
<dbReference type="GeneID" id="93776172"/>
<dbReference type="KEGG" id="ecr:ECIAI1_1958"/>
<dbReference type="HOGENOM" id="CLU_052665_0_0_6"/>
<dbReference type="GO" id="GO:0016765">
    <property type="term" value="F:transferase activity, transferring alkyl or aryl (other than methyl) groups"/>
    <property type="evidence" value="ECO:0007669"/>
    <property type="project" value="UniProtKB-UniRule"/>
</dbReference>
<dbReference type="GO" id="GO:0002098">
    <property type="term" value="P:tRNA wobble uridine modification"/>
    <property type="evidence" value="ECO:0007669"/>
    <property type="project" value="InterPro"/>
</dbReference>
<dbReference type="CDD" id="cd02440">
    <property type="entry name" value="AdoMet_MTases"/>
    <property type="match status" value="1"/>
</dbReference>
<dbReference type="FunFam" id="3.40.50.150:FF:000080">
    <property type="entry name" value="tRNA U34 carboxymethyltransferase"/>
    <property type="match status" value="1"/>
</dbReference>
<dbReference type="Gene3D" id="3.40.50.150">
    <property type="entry name" value="Vaccinia Virus protein VP39"/>
    <property type="match status" value="1"/>
</dbReference>
<dbReference type="HAMAP" id="MF_01590">
    <property type="entry name" value="tRNA_carboxymethyltr_CmoB"/>
    <property type="match status" value="1"/>
</dbReference>
<dbReference type="InterPro" id="IPR010017">
    <property type="entry name" value="CmoB"/>
</dbReference>
<dbReference type="InterPro" id="IPR027555">
    <property type="entry name" value="Mo5U34_MeTrfas-like"/>
</dbReference>
<dbReference type="InterPro" id="IPR029063">
    <property type="entry name" value="SAM-dependent_MTases_sf"/>
</dbReference>
<dbReference type="NCBIfam" id="NF011650">
    <property type="entry name" value="PRK15068.1"/>
    <property type="match status" value="1"/>
</dbReference>
<dbReference type="NCBIfam" id="TIGR00452">
    <property type="entry name" value="tRNA 5-methoxyuridine(34)/uridine 5-oxyacetic acid(34) synthase CmoB"/>
    <property type="match status" value="1"/>
</dbReference>
<dbReference type="PANTHER" id="PTHR43861:SF3">
    <property type="entry name" value="PUTATIVE (AFU_ORTHOLOGUE AFUA_2G14390)-RELATED"/>
    <property type="match status" value="1"/>
</dbReference>
<dbReference type="PANTHER" id="PTHR43861">
    <property type="entry name" value="TRANS-ACONITATE 2-METHYLTRANSFERASE-RELATED"/>
    <property type="match status" value="1"/>
</dbReference>
<dbReference type="Pfam" id="PF08003">
    <property type="entry name" value="Methyltransf_9"/>
    <property type="match status" value="1"/>
</dbReference>
<dbReference type="SUPFAM" id="SSF53335">
    <property type="entry name" value="S-adenosyl-L-methionine-dependent methyltransferases"/>
    <property type="match status" value="1"/>
</dbReference>
<gene>
    <name evidence="1" type="primary">cmoB</name>
    <name type="ordered locus">ECIAI1_1958</name>
</gene>
<feature type="chain" id="PRO_1000201296" description="tRNA U34 carboxymethyltransferase">
    <location>
        <begin position="1"/>
        <end position="323"/>
    </location>
</feature>
<feature type="binding site" evidence="1">
    <location>
        <position position="91"/>
    </location>
    <ligand>
        <name>carboxy-S-adenosyl-L-methionine</name>
        <dbReference type="ChEBI" id="CHEBI:134278"/>
    </ligand>
</feature>
<feature type="binding site" evidence="1">
    <location>
        <position position="105"/>
    </location>
    <ligand>
        <name>carboxy-S-adenosyl-L-methionine</name>
        <dbReference type="ChEBI" id="CHEBI:134278"/>
    </ligand>
</feature>
<feature type="binding site" evidence="1">
    <location>
        <position position="110"/>
    </location>
    <ligand>
        <name>carboxy-S-adenosyl-L-methionine</name>
        <dbReference type="ChEBI" id="CHEBI:134278"/>
    </ligand>
</feature>
<feature type="binding site" evidence="1">
    <location>
        <position position="130"/>
    </location>
    <ligand>
        <name>carboxy-S-adenosyl-L-methionine</name>
        <dbReference type="ChEBI" id="CHEBI:134278"/>
    </ligand>
</feature>
<feature type="binding site" evidence="1">
    <location>
        <begin position="152"/>
        <end position="154"/>
    </location>
    <ligand>
        <name>carboxy-S-adenosyl-L-methionine</name>
        <dbReference type="ChEBI" id="CHEBI:134278"/>
    </ligand>
</feature>
<feature type="binding site" evidence="1">
    <location>
        <begin position="181"/>
        <end position="182"/>
    </location>
    <ligand>
        <name>carboxy-S-adenosyl-L-methionine</name>
        <dbReference type="ChEBI" id="CHEBI:134278"/>
    </ligand>
</feature>
<feature type="binding site" evidence="1">
    <location>
        <position position="196"/>
    </location>
    <ligand>
        <name>carboxy-S-adenosyl-L-methionine</name>
        <dbReference type="ChEBI" id="CHEBI:134278"/>
    </ligand>
</feature>
<feature type="binding site" evidence="1">
    <location>
        <position position="200"/>
    </location>
    <ligand>
        <name>carboxy-S-adenosyl-L-methionine</name>
        <dbReference type="ChEBI" id="CHEBI:134278"/>
    </ligand>
</feature>
<feature type="binding site" evidence="1">
    <location>
        <position position="315"/>
    </location>
    <ligand>
        <name>carboxy-S-adenosyl-L-methionine</name>
        <dbReference type="ChEBI" id="CHEBI:134278"/>
    </ligand>
</feature>
<sequence>MIDFGNFYSLIAKNHLSHWLETLPAQIANWQREQQHGLFKQWSNAVEFLPEIKPYRLDLLHSVTAESEEPLSTGQIKRIETLMRNLMPWRKGPFSLYGVNIDTEWRSDWKWDRVLPHLSDLTGRTILDVGCGSGYHMWRMIGAGAHLAVGIDPTQLFLCQFEAVRKLLGNDQRAHLLPLGIEQLPALKAFDTVFSMGVLYHRRSPLEHLWQLKDQLVNEGELVLETLVIDGDENTVLVPGDRYAQMRNVYFIPSALALKNWLKKCGFVDIRIVDVCVTTTEEQRRTEWMVTESLSDFLDPHDPSKTVEGYPAPKRAVLIARKP</sequence>
<organism>
    <name type="scientific">Escherichia coli O8 (strain IAI1)</name>
    <dbReference type="NCBI Taxonomy" id="585034"/>
    <lineage>
        <taxon>Bacteria</taxon>
        <taxon>Pseudomonadati</taxon>
        <taxon>Pseudomonadota</taxon>
        <taxon>Gammaproteobacteria</taxon>
        <taxon>Enterobacterales</taxon>
        <taxon>Enterobacteriaceae</taxon>
        <taxon>Escherichia</taxon>
    </lineage>
</organism>
<reference key="1">
    <citation type="journal article" date="2009" name="PLoS Genet.">
        <title>Organised genome dynamics in the Escherichia coli species results in highly diverse adaptive paths.</title>
        <authorList>
            <person name="Touchon M."/>
            <person name="Hoede C."/>
            <person name="Tenaillon O."/>
            <person name="Barbe V."/>
            <person name="Baeriswyl S."/>
            <person name="Bidet P."/>
            <person name="Bingen E."/>
            <person name="Bonacorsi S."/>
            <person name="Bouchier C."/>
            <person name="Bouvet O."/>
            <person name="Calteau A."/>
            <person name="Chiapello H."/>
            <person name="Clermont O."/>
            <person name="Cruveiller S."/>
            <person name="Danchin A."/>
            <person name="Diard M."/>
            <person name="Dossat C."/>
            <person name="Karoui M.E."/>
            <person name="Frapy E."/>
            <person name="Garry L."/>
            <person name="Ghigo J.M."/>
            <person name="Gilles A.M."/>
            <person name="Johnson J."/>
            <person name="Le Bouguenec C."/>
            <person name="Lescat M."/>
            <person name="Mangenot S."/>
            <person name="Martinez-Jehanne V."/>
            <person name="Matic I."/>
            <person name="Nassif X."/>
            <person name="Oztas S."/>
            <person name="Petit M.A."/>
            <person name="Pichon C."/>
            <person name="Rouy Z."/>
            <person name="Ruf C.S."/>
            <person name="Schneider D."/>
            <person name="Tourret J."/>
            <person name="Vacherie B."/>
            <person name="Vallenet D."/>
            <person name="Medigue C."/>
            <person name="Rocha E.P.C."/>
            <person name="Denamur E."/>
        </authorList>
    </citation>
    <scope>NUCLEOTIDE SEQUENCE [LARGE SCALE GENOMIC DNA]</scope>
    <source>
        <strain>IAI1</strain>
    </source>
</reference>
<keyword id="KW-0808">Transferase</keyword>
<keyword id="KW-0819">tRNA processing</keyword>